<proteinExistence type="evidence at protein level"/>
<name>RL34_LISMO</name>
<keyword id="KW-0002">3D-structure</keyword>
<keyword id="KW-1185">Reference proteome</keyword>
<keyword id="KW-0687">Ribonucleoprotein</keyword>
<keyword id="KW-0689">Ribosomal protein</keyword>
<comment type="similarity">
    <text evidence="1">Belongs to the bacterial ribosomal protein bL34 family.</text>
</comment>
<gene>
    <name evidence="1" type="primary">rpmH</name>
    <name type="ordered locus">lmo2856</name>
</gene>
<protein>
    <recommendedName>
        <fullName evidence="1">Large ribosomal subunit protein bL34</fullName>
    </recommendedName>
    <alternativeName>
        <fullName evidence="3">50S ribosomal protein L34</fullName>
    </alternativeName>
</protein>
<organism>
    <name type="scientific">Listeria monocytogenes serovar 1/2a (strain ATCC BAA-679 / EGD-e)</name>
    <dbReference type="NCBI Taxonomy" id="169963"/>
    <lineage>
        <taxon>Bacteria</taxon>
        <taxon>Bacillati</taxon>
        <taxon>Bacillota</taxon>
        <taxon>Bacilli</taxon>
        <taxon>Bacillales</taxon>
        <taxon>Listeriaceae</taxon>
        <taxon>Listeria</taxon>
    </lineage>
</organism>
<dbReference type="EMBL" id="AL591984">
    <property type="protein sequence ID" value="CAD01069.1"/>
    <property type="molecule type" value="Genomic_DNA"/>
</dbReference>
<dbReference type="PIR" id="AG1431">
    <property type="entry name" value="AG1431"/>
</dbReference>
<dbReference type="RefSeq" id="NP_466378.1">
    <property type="nucleotide sequence ID" value="NC_003210.1"/>
</dbReference>
<dbReference type="RefSeq" id="WP_003718062.1">
    <property type="nucleotide sequence ID" value="NZ_CP149495.1"/>
</dbReference>
<dbReference type="PDB" id="7NHN">
    <property type="method" value="EM"/>
    <property type="resolution" value="2.90 A"/>
    <property type="chains" value="7=1-44"/>
</dbReference>
<dbReference type="PDB" id="8A57">
    <property type="method" value="EM"/>
    <property type="resolution" value="2.30 A"/>
    <property type="chains" value="7=1-44"/>
</dbReference>
<dbReference type="PDB" id="8A5I">
    <property type="method" value="EM"/>
    <property type="resolution" value="2.30 A"/>
    <property type="chains" value="7=1-44"/>
</dbReference>
<dbReference type="PDB" id="8A63">
    <property type="method" value="EM"/>
    <property type="resolution" value="3.10 A"/>
    <property type="chains" value="7=1-44"/>
</dbReference>
<dbReference type="PDBsum" id="7NHN"/>
<dbReference type="PDBsum" id="8A57"/>
<dbReference type="PDBsum" id="8A5I"/>
<dbReference type="PDBsum" id="8A63"/>
<dbReference type="EMDB" id="EMD-12334"/>
<dbReference type="EMDB" id="EMD-15161"/>
<dbReference type="EMDB" id="EMD-15175"/>
<dbReference type="EMDB" id="EMD-15204"/>
<dbReference type="SMR" id="P66248"/>
<dbReference type="STRING" id="169963.gene:17595574"/>
<dbReference type="PaxDb" id="169963-lmo2856"/>
<dbReference type="EnsemblBacteria" id="CAD01069">
    <property type="protein sequence ID" value="CAD01069"/>
    <property type="gene ID" value="CAD01069"/>
</dbReference>
<dbReference type="GeneID" id="93240767"/>
<dbReference type="GeneID" id="986371"/>
<dbReference type="KEGG" id="lmo:lmo2856"/>
<dbReference type="PATRIC" id="fig|169963.11.peg.2927"/>
<dbReference type="eggNOG" id="COG0230">
    <property type="taxonomic scope" value="Bacteria"/>
</dbReference>
<dbReference type="HOGENOM" id="CLU_129938_2_0_9"/>
<dbReference type="OrthoDB" id="9804164at2"/>
<dbReference type="PhylomeDB" id="P66248"/>
<dbReference type="BioCyc" id="LMON169963:LMO2856-MONOMER"/>
<dbReference type="Proteomes" id="UP000000817">
    <property type="component" value="Chromosome"/>
</dbReference>
<dbReference type="GO" id="GO:1990904">
    <property type="term" value="C:ribonucleoprotein complex"/>
    <property type="evidence" value="ECO:0007669"/>
    <property type="project" value="UniProtKB-KW"/>
</dbReference>
<dbReference type="GO" id="GO:0005840">
    <property type="term" value="C:ribosome"/>
    <property type="evidence" value="ECO:0007669"/>
    <property type="project" value="UniProtKB-KW"/>
</dbReference>
<dbReference type="GO" id="GO:0003735">
    <property type="term" value="F:structural constituent of ribosome"/>
    <property type="evidence" value="ECO:0007669"/>
    <property type="project" value="InterPro"/>
</dbReference>
<dbReference type="GO" id="GO:0006412">
    <property type="term" value="P:translation"/>
    <property type="evidence" value="ECO:0007669"/>
    <property type="project" value="UniProtKB-UniRule"/>
</dbReference>
<dbReference type="FunFam" id="1.10.287.3980:FF:000001">
    <property type="entry name" value="Mitochondrial ribosomal protein L34"/>
    <property type="match status" value="1"/>
</dbReference>
<dbReference type="Gene3D" id="1.10.287.3980">
    <property type="match status" value="1"/>
</dbReference>
<dbReference type="HAMAP" id="MF_00391">
    <property type="entry name" value="Ribosomal_bL34"/>
    <property type="match status" value="1"/>
</dbReference>
<dbReference type="InterPro" id="IPR000271">
    <property type="entry name" value="Ribosomal_bL34"/>
</dbReference>
<dbReference type="InterPro" id="IPR020939">
    <property type="entry name" value="Ribosomal_bL34_CS"/>
</dbReference>
<dbReference type="NCBIfam" id="TIGR01030">
    <property type="entry name" value="rpmH_bact"/>
    <property type="match status" value="1"/>
</dbReference>
<dbReference type="PANTHER" id="PTHR14503:SF4">
    <property type="entry name" value="LARGE RIBOSOMAL SUBUNIT PROTEIN BL34M"/>
    <property type="match status" value="1"/>
</dbReference>
<dbReference type="PANTHER" id="PTHR14503">
    <property type="entry name" value="MITOCHONDRIAL RIBOSOMAL PROTEIN 34 FAMILY MEMBER"/>
    <property type="match status" value="1"/>
</dbReference>
<dbReference type="Pfam" id="PF00468">
    <property type="entry name" value="Ribosomal_L34"/>
    <property type="match status" value="1"/>
</dbReference>
<dbReference type="PROSITE" id="PS00784">
    <property type="entry name" value="RIBOSOMAL_L34"/>
    <property type="match status" value="1"/>
</dbReference>
<accession>P66248</accession>
<accession>Q926Q3</accession>
<sequence>MKRTYQPSKRKRKKVHGFRTRMSTKNGRRVLASRRRKGRKVLSA</sequence>
<evidence type="ECO:0000255" key="1">
    <source>
        <dbReference type="HAMAP-Rule" id="MF_00391"/>
    </source>
</evidence>
<evidence type="ECO:0000256" key="2">
    <source>
        <dbReference type="SAM" id="MobiDB-lite"/>
    </source>
</evidence>
<evidence type="ECO:0000305" key="3"/>
<evidence type="ECO:0007829" key="4">
    <source>
        <dbReference type="PDB" id="8A57"/>
    </source>
</evidence>
<reference key="1">
    <citation type="journal article" date="2001" name="Science">
        <title>Comparative genomics of Listeria species.</title>
        <authorList>
            <person name="Glaser P."/>
            <person name="Frangeul L."/>
            <person name="Buchrieser C."/>
            <person name="Rusniok C."/>
            <person name="Amend A."/>
            <person name="Baquero F."/>
            <person name="Berche P."/>
            <person name="Bloecker H."/>
            <person name="Brandt P."/>
            <person name="Chakraborty T."/>
            <person name="Charbit A."/>
            <person name="Chetouani F."/>
            <person name="Couve E."/>
            <person name="de Daruvar A."/>
            <person name="Dehoux P."/>
            <person name="Domann E."/>
            <person name="Dominguez-Bernal G."/>
            <person name="Duchaud E."/>
            <person name="Durant L."/>
            <person name="Dussurget O."/>
            <person name="Entian K.-D."/>
            <person name="Fsihi H."/>
            <person name="Garcia-del Portillo F."/>
            <person name="Garrido P."/>
            <person name="Gautier L."/>
            <person name="Goebel W."/>
            <person name="Gomez-Lopez N."/>
            <person name="Hain T."/>
            <person name="Hauf J."/>
            <person name="Jackson D."/>
            <person name="Jones L.-M."/>
            <person name="Kaerst U."/>
            <person name="Kreft J."/>
            <person name="Kuhn M."/>
            <person name="Kunst F."/>
            <person name="Kurapkat G."/>
            <person name="Madueno E."/>
            <person name="Maitournam A."/>
            <person name="Mata Vicente J."/>
            <person name="Ng E."/>
            <person name="Nedjari H."/>
            <person name="Nordsiek G."/>
            <person name="Novella S."/>
            <person name="de Pablos B."/>
            <person name="Perez-Diaz J.-C."/>
            <person name="Purcell R."/>
            <person name="Remmel B."/>
            <person name="Rose M."/>
            <person name="Schlueter T."/>
            <person name="Simoes N."/>
            <person name="Tierrez A."/>
            <person name="Vazquez-Boland J.-A."/>
            <person name="Voss H."/>
            <person name="Wehland J."/>
            <person name="Cossart P."/>
        </authorList>
    </citation>
    <scope>NUCLEOTIDE SEQUENCE [LARGE SCALE GENOMIC DNA]</scope>
    <source>
        <strain>ATCC BAA-679 / EGD-e</strain>
    </source>
</reference>
<feature type="chain" id="PRO_0000187405" description="Large ribosomal subunit protein bL34">
    <location>
        <begin position="1"/>
        <end position="44"/>
    </location>
</feature>
<feature type="region of interest" description="Disordered" evidence="2">
    <location>
        <begin position="1"/>
        <end position="44"/>
    </location>
</feature>
<feature type="compositionally biased region" description="Basic residues" evidence="2">
    <location>
        <begin position="1"/>
        <end position="19"/>
    </location>
</feature>
<feature type="compositionally biased region" description="Basic residues" evidence="2">
    <location>
        <begin position="26"/>
        <end position="44"/>
    </location>
</feature>
<feature type="helix" evidence="4">
    <location>
        <begin position="9"/>
        <end position="16"/>
    </location>
</feature>
<feature type="helix" evidence="4">
    <location>
        <begin position="18"/>
        <end position="22"/>
    </location>
</feature>
<feature type="helix" evidence="4">
    <location>
        <begin position="25"/>
        <end position="37"/>
    </location>
</feature>